<protein>
    <recommendedName>
        <fullName evidence="1">Ribonuclease H</fullName>
        <shortName evidence="1">RNase H</shortName>
        <ecNumber evidence="1">3.1.26.4</ecNumber>
    </recommendedName>
</protein>
<feature type="chain" id="PRO_1000074639" description="Ribonuclease H">
    <location>
        <begin position="1"/>
        <end position="155"/>
    </location>
</feature>
<feature type="domain" description="RNase H type-1" evidence="2">
    <location>
        <begin position="1"/>
        <end position="142"/>
    </location>
</feature>
<feature type="binding site" evidence="1">
    <location>
        <position position="10"/>
    </location>
    <ligand>
        <name>Mg(2+)</name>
        <dbReference type="ChEBI" id="CHEBI:18420"/>
        <label>1</label>
    </ligand>
</feature>
<feature type="binding site" evidence="1">
    <location>
        <position position="10"/>
    </location>
    <ligand>
        <name>Mg(2+)</name>
        <dbReference type="ChEBI" id="CHEBI:18420"/>
        <label>2</label>
    </ligand>
</feature>
<feature type="binding site" evidence="1">
    <location>
        <position position="48"/>
    </location>
    <ligand>
        <name>Mg(2+)</name>
        <dbReference type="ChEBI" id="CHEBI:18420"/>
        <label>1</label>
    </ligand>
</feature>
<feature type="binding site" evidence="1">
    <location>
        <position position="70"/>
    </location>
    <ligand>
        <name>Mg(2+)</name>
        <dbReference type="ChEBI" id="CHEBI:18420"/>
        <label>1</label>
    </ligand>
</feature>
<feature type="binding site" evidence="1">
    <location>
        <position position="134"/>
    </location>
    <ligand>
        <name>Mg(2+)</name>
        <dbReference type="ChEBI" id="CHEBI:18420"/>
        <label>2</label>
    </ligand>
</feature>
<organism>
    <name type="scientific">Citrobacter koseri (strain ATCC BAA-895 / CDC 4225-83 / SGSC4696)</name>
    <dbReference type="NCBI Taxonomy" id="290338"/>
    <lineage>
        <taxon>Bacteria</taxon>
        <taxon>Pseudomonadati</taxon>
        <taxon>Pseudomonadota</taxon>
        <taxon>Gammaproteobacteria</taxon>
        <taxon>Enterobacterales</taxon>
        <taxon>Enterobacteriaceae</taxon>
        <taxon>Citrobacter</taxon>
    </lineage>
</organism>
<keyword id="KW-0963">Cytoplasm</keyword>
<keyword id="KW-0255">Endonuclease</keyword>
<keyword id="KW-0378">Hydrolase</keyword>
<keyword id="KW-0460">Magnesium</keyword>
<keyword id="KW-0479">Metal-binding</keyword>
<keyword id="KW-0540">Nuclease</keyword>
<keyword id="KW-1185">Reference proteome</keyword>
<gene>
    <name evidence="1" type="primary">rnhA</name>
    <name type="ordered locus">CKO_02969</name>
</gene>
<reference key="1">
    <citation type="submission" date="2007-08" db="EMBL/GenBank/DDBJ databases">
        <authorList>
            <consortium name="The Citrobacter koseri Genome Sequencing Project"/>
            <person name="McClelland M."/>
            <person name="Sanderson E.K."/>
            <person name="Porwollik S."/>
            <person name="Spieth J."/>
            <person name="Clifton W.S."/>
            <person name="Latreille P."/>
            <person name="Courtney L."/>
            <person name="Wang C."/>
            <person name="Pepin K."/>
            <person name="Bhonagiri V."/>
            <person name="Nash W."/>
            <person name="Johnson M."/>
            <person name="Thiruvilangam P."/>
            <person name="Wilson R."/>
        </authorList>
    </citation>
    <scope>NUCLEOTIDE SEQUENCE [LARGE SCALE GENOMIC DNA]</scope>
    <source>
        <strain>ATCC BAA-895 / CDC 4225-83 / SGSC4696</strain>
    </source>
</reference>
<accession>A8AKR0</accession>
<name>RNH_CITK8</name>
<evidence type="ECO:0000255" key="1">
    <source>
        <dbReference type="HAMAP-Rule" id="MF_00042"/>
    </source>
</evidence>
<evidence type="ECO:0000255" key="2">
    <source>
        <dbReference type="PROSITE-ProRule" id="PRU00408"/>
    </source>
</evidence>
<comment type="function">
    <text evidence="1">Endonuclease that specifically degrades the RNA of RNA-DNA hybrids.</text>
</comment>
<comment type="catalytic activity">
    <reaction evidence="1">
        <text>Endonucleolytic cleavage to 5'-phosphomonoester.</text>
        <dbReference type="EC" id="3.1.26.4"/>
    </reaction>
</comment>
<comment type="cofactor">
    <cofactor evidence="1">
        <name>Mg(2+)</name>
        <dbReference type="ChEBI" id="CHEBI:18420"/>
    </cofactor>
    <text evidence="1">Binds 1 Mg(2+) ion per subunit. May bind a second metal ion at a regulatory site, or after substrate binding.</text>
</comment>
<comment type="subunit">
    <text evidence="1">Monomer.</text>
</comment>
<comment type="subcellular location">
    <subcellularLocation>
        <location evidence="1">Cytoplasm</location>
    </subcellularLocation>
</comment>
<comment type="similarity">
    <text evidence="1">Belongs to the RNase H family.</text>
</comment>
<dbReference type="EC" id="3.1.26.4" evidence="1"/>
<dbReference type="EMBL" id="CP000822">
    <property type="protein sequence ID" value="ABV14073.1"/>
    <property type="molecule type" value="Genomic_DNA"/>
</dbReference>
<dbReference type="RefSeq" id="WP_012133784.1">
    <property type="nucleotide sequence ID" value="NC_009792.1"/>
</dbReference>
<dbReference type="SMR" id="A8AKR0"/>
<dbReference type="STRING" id="290338.CKO_02969"/>
<dbReference type="GeneID" id="45136784"/>
<dbReference type="KEGG" id="cko:CKO_02969"/>
<dbReference type="HOGENOM" id="CLU_030894_6_0_6"/>
<dbReference type="OrthoDB" id="7845843at2"/>
<dbReference type="Proteomes" id="UP000008148">
    <property type="component" value="Chromosome"/>
</dbReference>
<dbReference type="GO" id="GO:0005737">
    <property type="term" value="C:cytoplasm"/>
    <property type="evidence" value="ECO:0007669"/>
    <property type="project" value="UniProtKB-SubCell"/>
</dbReference>
<dbReference type="GO" id="GO:0000287">
    <property type="term" value="F:magnesium ion binding"/>
    <property type="evidence" value="ECO:0007669"/>
    <property type="project" value="UniProtKB-UniRule"/>
</dbReference>
<dbReference type="GO" id="GO:0003676">
    <property type="term" value="F:nucleic acid binding"/>
    <property type="evidence" value="ECO:0007669"/>
    <property type="project" value="InterPro"/>
</dbReference>
<dbReference type="GO" id="GO:0004523">
    <property type="term" value="F:RNA-DNA hybrid ribonuclease activity"/>
    <property type="evidence" value="ECO:0007669"/>
    <property type="project" value="UniProtKB-UniRule"/>
</dbReference>
<dbReference type="GO" id="GO:0043137">
    <property type="term" value="P:DNA replication, removal of RNA primer"/>
    <property type="evidence" value="ECO:0007669"/>
    <property type="project" value="TreeGrafter"/>
</dbReference>
<dbReference type="CDD" id="cd09278">
    <property type="entry name" value="RNase_HI_prokaryote_like"/>
    <property type="match status" value="1"/>
</dbReference>
<dbReference type="FunFam" id="3.30.420.10:FF:000008">
    <property type="entry name" value="Ribonuclease H"/>
    <property type="match status" value="1"/>
</dbReference>
<dbReference type="Gene3D" id="3.30.420.10">
    <property type="entry name" value="Ribonuclease H-like superfamily/Ribonuclease H"/>
    <property type="match status" value="1"/>
</dbReference>
<dbReference type="HAMAP" id="MF_00042">
    <property type="entry name" value="RNase_H"/>
    <property type="match status" value="1"/>
</dbReference>
<dbReference type="InterPro" id="IPR050092">
    <property type="entry name" value="RNase_H"/>
</dbReference>
<dbReference type="InterPro" id="IPR012337">
    <property type="entry name" value="RNaseH-like_sf"/>
</dbReference>
<dbReference type="InterPro" id="IPR002156">
    <property type="entry name" value="RNaseH_domain"/>
</dbReference>
<dbReference type="InterPro" id="IPR036397">
    <property type="entry name" value="RNaseH_sf"/>
</dbReference>
<dbReference type="InterPro" id="IPR022892">
    <property type="entry name" value="RNaseHI"/>
</dbReference>
<dbReference type="NCBIfam" id="NF001236">
    <property type="entry name" value="PRK00203.1"/>
    <property type="match status" value="1"/>
</dbReference>
<dbReference type="PANTHER" id="PTHR10642">
    <property type="entry name" value="RIBONUCLEASE H1"/>
    <property type="match status" value="1"/>
</dbReference>
<dbReference type="PANTHER" id="PTHR10642:SF26">
    <property type="entry name" value="RIBONUCLEASE H1"/>
    <property type="match status" value="1"/>
</dbReference>
<dbReference type="Pfam" id="PF00075">
    <property type="entry name" value="RNase_H"/>
    <property type="match status" value="1"/>
</dbReference>
<dbReference type="SUPFAM" id="SSF53098">
    <property type="entry name" value="Ribonuclease H-like"/>
    <property type="match status" value="1"/>
</dbReference>
<dbReference type="PROSITE" id="PS50879">
    <property type="entry name" value="RNASE_H_1"/>
    <property type="match status" value="1"/>
</dbReference>
<sequence length="155" mass="17538">MLKQVEIFTDGSCLGNPGPGGYGAILRYRGHEKTFSEGYSLTTNNRMELMAAIVALEALKEHCEVTLSTDSQYVRQGITQWIHNWKKRGWKTAEKKPVKNVDLWKRLDAALGQHQIKWEWVKGHAGHPENERCDELARAAAMNPTQEDVGYQAEA</sequence>
<proteinExistence type="inferred from homology"/>